<feature type="initiator methionine" description="Removed" evidence="2">
    <location>
        <position position="1"/>
    </location>
</feature>
<feature type="chain" id="PRO_0000284975" description="Proteasomal ATPase-associated factor 1">
    <location>
        <begin position="2"/>
        <end position="392"/>
    </location>
</feature>
<feature type="repeat" description="WD 1">
    <location>
        <begin position="90"/>
        <end position="129"/>
    </location>
</feature>
<feature type="repeat" description="WD 2">
    <location>
        <begin position="132"/>
        <end position="171"/>
    </location>
</feature>
<feature type="repeat" description="WD 3">
    <location>
        <begin position="174"/>
        <end position="215"/>
    </location>
</feature>
<feature type="repeat" description="WD 4">
    <location>
        <begin position="278"/>
        <end position="316"/>
    </location>
</feature>
<feature type="repeat" description="WD 5">
    <location>
        <begin position="360"/>
        <end position="392"/>
    </location>
</feature>
<feature type="modified residue" description="N-acetylalanine" evidence="2">
    <location>
        <position position="2"/>
    </location>
</feature>
<name>PAAF1_BOVIN</name>
<reference key="1">
    <citation type="submission" date="2006-06" db="EMBL/GenBank/DDBJ databases">
        <authorList>
            <consortium name="NIH - Mammalian Gene Collection (MGC) project"/>
        </authorList>
    </citation>
    <scope>NUCLEOTIDE SEQUENCE [LARGE SCALE MRNA]</scope>
    <source>
        <strain>Hereford</strain>
        <tissue>Brain cortex</tissue>
    </source>
</reference>
<accession>Q148I1</accession>
<gene>
    <name type="primary">PAAF1</name>
    <name type="synonym">WDR71</name>
</gene>
<keyword id="KW-0007">Acetylation</keyword>
<keyword id="KW-0647">Proteasome</keyword>
<keyword id="KW-1185">Reference proteome</keyword>
<keyword id="KW-0677">Repeat</keyword>
<keyword id="KW-0853">WD repeat</keyword>
<proteinExistence type="evidence at transcript level"/>
<protein>
    <recommendedName>
        <fullName>Proteasomal ATPase-associated factor 1</fullName>
    </recommendedName>
    <alternativeName>
        <fullName>WD repeat-containing protein 71</fullName>
    </alternativeName>
</protein>
<evidence type="ECO:0000250" key="1"/>
<evidence type="ECO:0000250" key="2">
    <source>
        <dbReference type="UniProtKB" id="Q9BRP4"/>
    </source>
</evidence>
<evidence type="ECO:0000305" key="3"/>
<organism>
    <name type="scientific">Bos taurus</name>
    <name type="common">Bovine</name>
    <dbReference type="NCBI Taxonomy" id="9913"/>
    <lineage>
        <taxon>Eukaryota</taxon>
        <taxon>Metazoa</taxon>
        <taxon>Chordata</taxon>
        <taxon>Craniata</taxon>
        <taxon>Vertebrata</taxon>
        <taxon>Euteleostomi</taxon>
        <taxon>Mammalia</taxon>
        <taxon>Eutheria</taxon>
        <taxon>Laurasiatheria</taxon>
        <taxon>Artiodactyla</taxon>
        <taxon>Ruminantia</taxon>
        <taxon>Pecora</taxon>
        <taxon>Bovidae</taxon>
        <taxon>Bovinae</taxon>
        <taxon>Bos</taxon>
    </lineage>
</organism>
<sequence length="392" mass="42194">MAAPLRIQSDWAQALRKDEGEAWLSCHPPGKPTLYGSLTCQGIGLDGIPEVTASEGFIVNEINKKSIHVSCPKENVSSKFLAPYTTFSRIHTKSITCLDISSGGGLGVSSSADGSMKIWQASNGELRRVLEGHVFDVNCCRFFPSGLVVLSGGMDAQLKIWSAEDASCVVTFKGHKGGILDTAIVDRGKNVVSGSRDGTARLWDCGRSACLGVIADCGSSINGVAVGAADNSINLGSPEQMPSEREVGTESKMLLLAREDKKLQCLGLQSRQPLFLFIGSDAFNCCTFLSGFLLLAGTQDGNIYQLDVRNPRTPVQVIHRSGAPVMSLLSFRDGFIASQGDGSCFIVQQDLDYVIELTGADCDPVYKVATWEKQIYTCCRDGLVRRYQLSDL</sequence>
<dbReference type="EMBL" id="BC118307">
    <property type="protein sequence ID" value="AAI18308.1"/>
    <property type="molecule type" value="mRNA"/>
</dbReference>
<dbReference type="RefSeq" id="NP_001069458.1">
    <property type="nucleotide sequence ID" value="NM_001075990.1"/>
</dbReference>
<dbReference type="SMR" id="Q148I1"/>
<dbReference type="FunCoup" id="Q148I1">
    <property type="interactions" value="1927"/>
</dbReference>
<dbReference type="STRING" id="9913.ENSBTAP00000066011"/>
<dbReference type="PaxDb" id="9913-ENSBTAP00000004794"/>
<dbReference type="GeneID" id="533348"/>
<dbReference type="KEGG" id="bta:533348"/>
<dbReference type="CTD" id="80227"/>
<dbReference type="VEuPathDB" id="HostDB:ENSBTAG00000003679"/>
<dbReference type="eggNOG" id="KOG0266">
    <property type="taxonomic scope" value="Eukaryota"/>
</dbReference>
<dbReference type="HOGENOM" id="CLU_037051_1_0_1"/>
<dbReference type="InParanoid" id="Q148I1"/>
<dbReference type="OMA" id="CNWNEAL"/>
<dbReference type="OrthoDB" id="27537at2759"/>
<dbReference type="TreeFam" id="TF313690"/>
<dbReference type="Proteomes" id="UP000009136">
    <property type="component" value="Chromosome 15"/>
</dbReference>
<dbReference type="Bgee" id="ENSBTAG00000003679">
    <property type="expression patterns" value="Expressed in spermatocyte and 107 other cell types or tissues"/>
</dbReference>
<dbReference type="GO" id="GO:0005829">
    <property type="term" value="C:cytosol"/>
    <property type="evidence" value="ECO:0000304"/>
    <property type="project" value="Reactome"/>
</dbReference>
<dbReference type="GO" id="GO:0000502">
    <property type="term" value="C:proteasome complex"/>
    <property type="evidence" value="ECO:0007669"/>
    <property type="project" value="UniProtKB-KW"/>
</dbReference>
<dbReference type="GO" id="GO:0046540">
    <property type="term" value="C:U4/U6 x U5 tri-snRNP complex"/>
    <property type="evidence" value="ECO:0000318"/>
    <property type="project" value="GO_Central"/>
</dbReference>
<dbReference type="GO" id="GO:0030621">
    <property type="term" value="F:U4 snRNA binding"/>
    <property type="evidence" value="ECO:0000318"/>
    <property type="project" value="GO_Central"/>
</dbReference>
<dbReference type="GO" id="GO:0017070">
    <property type="term" value="F:U6 snRNA binding"/>
    <property type="evidence" value="ECO:0000318"/>
    <property type="project" value="GO_Central"/>
</dbReference>
<dbReference type="GO" id="GO:0000398">
    <property type="term" value="P:mRNA splicing, via spliceosome"/>
    <property type="evidence" value="ECO:0000318"/>
    <property type="project" value="GO_Central"/>
</dbReference>
<dbReference type="FunFam" id="2.130.10.10:FF:000181">
    <property type="entry name" value="Proteasomal ATPase associated factor 1"/>
    <property type="match status" value="1"/>
</dbReference>
<dbReference type="FunFam" id="2.130.10.10:FF:000212">
    <property type="entry name" value="Proteasomal ATPase associated factor 1"/>
    <property type="match status" value="1"/>
</dbReference>
<dbReference type="Gene3D" id="2.130.10.10">
    <property type="entry name" value="YVTN repeat-like/Quinoprotein amine dehydrogenase"/>
    <property type="match status" value="2"/>
</dbReference>
<dbReference type="InterPro" id="IPR020472">
    <property type="entry name" value="G-protein_beta_WD-40_rep"/>
</dbReference>
<dbReference type="InterPro" id="IPR015943">
    <property type="entry name" value="WD40/YVTN_repeat-like_dom_sf"/>
</dbReference>
<dbReference type="InterPro" id="IPR036322">
    <property type="entry name" value="WD40_repeat_dom_sf"/>
</dbReference>
<dbReference type="InterPro" id="IPR001680">
    <property type="entry name" value="WD40_rpt"/>
</dbReference>
<dbReference type="InterPro" id="IPR051179">
    <property type="entry name" value="WD_repeat_multifunction"/>
</dbReference>
<dbReference type="PANTHER" id="PTHR19857:SF19">
    <property type="entry name" value="26S PROTEASOME REGULATORY SUBUNIT RPN14"/>
    <property type="match status" value="1"/>
</dbReference>
<dbReference type="PANTHER" id="PTHR19857">
    <property type="entry name" value="MITOCHONDRIAL DIVISION PROTEIN 1-RELATED"/>
    <property type="match status" value="1"/>
</dbReference>
<dbReference type="Pfam" id="PF00400">
    <property type="entry name" value="WD40"/>
    <property type="match status" value="3"/>
</dbReference>
<dbReference type="PRINTS" id="PR00320">
    <property type="entry name" value="GPROTEINBRPT"/>
</dbReference>
<dbReference type="SMART" id="SM00320">
    <property type="entry name" value="WD40"/>
    <property type="match status" value="6"/>
</dbReference>
<dbReference type="SUPFAM" id="SSF50978">
    <property type="entry name" value="WD40 repeat-like"/>
    <property type="match status" value="1"/>
</dbReference>
<dbReference type="PROSITE" id="PS00678">
    <property type="entry name" value="WD_REPEATS_1"/>
    <property type="match status" value="1"/>
</dbReference>
<dbReference type="PROSITE" id="PS50082">
    <property type="entry name" value="WD_REPEATS_2"/>
    <property type="match status" value="3"/>
</dbReference>
<dbReference type="PROSITE" id="PS50294">
    <property type="entry name" value="WD_REPEATS_REGION"/>
    <property type="match status" value="1"/>
</dbReference>
<comment type="function">
    <text evidence="1">Inhibits proteasome 26S assembly and activity by impairing the association of the 19S regulatory complex with the 20S core. Protects SUPT6H from proteasomal degradation (By similarity).</text>
</comment>
<comment type="subunit">
    <text evidence="1">Interacts with PSMC1, PSMC2, PSMC3, PSMC4, PSMC5 and PSMC6. Interacts with SUPT6H.</text>
</comment>
<comment type="similarity">
    <text evidence="3">Belongs to the WD repeat PAAF1/RPN14 family.</text>
</comment>